<protein>
    <recommendedName>
        <fullName>Uncharacterized metallophosphoesterase YunD</fullName>
    </recommendedName>
</protein>
<sequence length="462" mass="51871">MKEKLRLYHTNDLHSHFENWPKIVDYIEQKRKEHQSDGEETLVFDIGDHLDRFQFVTEATFGKANVDLLNRLHIDGAAIGNNEGITLPHEELAALYDHAEFPVIVSNLFDKNGNRPSWAVPYHIKSLKNGMSIAFLGVTVPYYPVYDKLGWTVTDALESIKETILEVKGQADIIVLLSHLGILDDQAVAEAVPEIDVILESHTHHLLEDGQVVNGVLLASAEKYGHYVGCVEITVDSVQRSINSKTASVQNMAEWTGESAETKAFLNEKEREAEEKLSDAVAELAQDAEVKWFEESELPLLLAYALKEWCETDISMVNSGVILGPLKAGPVTKLDLHRICPHPINPVAVRLTGEELKETIVHAASEQMEQLRIKGLGFRGEVMGKMVYAGVEVETKRLDDGITHVTRITLNGEDIEKHKQYSVAVLDMFTLGKLFPLIRDAAEKEYFMPEFLRDLLAWKLAQ</sequence>
<evidence type="ECO:0000250" key="1"/>
<evidence type="ECO:0000255" key="2"/>
<evidence type="ECO:0000305" key="3"/>
<comment type="cofactor">
    <cofactor evidence="1">
        <name>a divalent metal cation</name>
        <dbReference type="ChEBI" id="CHEBI:60240"/>
    </cofactor>
    <text evidence="1">Binds 2 divalent metal cations.</text>
</comment>
<comment type="similarity">
    <text evidence="3">Belongs to the metallophosphoesterase superfamily.</text>
</comment>
<organism>
    <name type="scientific">Bacillus subtilis (strain 168)</name>
    <dbReference type="NCBI Taxonomy" id="224308"/>
    <lineage>
        <taxon>Bacteria</taxon>
        <taxon>Bacillati</taxon>
        <taxon>Bacillota</taxon>
        <taxon>Bacilli</taxon>
        <taxon>Bacillales</taxon>
        <taxon>Bacillaceae</taxon>
        <taxon>Bacillus</taxon>
    </lineage>
</organism>
<dbReference type="EMBL" id="AL009126">
    <property type="protein sequence ID" value="CAB15227.1"/>
    <property type="molecule type" value="Genomic_DNA"/>
</dbReference>
<dbReference type="PIR" id="G70015">
    <property type="entry name" value="G70015"/>
</dbReference>
<dbReference type="RefSeq" id="NP_391117.1">
    <property type="nucleotide sequence ID" value="NC_000964.3"/>
</dbReference>
<dbReference type="RefSeq" id="WP_003242525.1">
    <property type="nucleotide sequence ID" value="NZ_OZ025638.1"/>
</dbReference>
<dbReference type="SMR" id="O32133"/>
<dbReference type="FunCoup" id="O32133">
    <property type="interactions" value="127"/>
</dbReference>
<dbReference type="STRING" id="224308.BSU32370"/>
<dbReference type="PaxDb" id="224308-BSU32370"/>
<dbReference type="DNASU" id="936666"/>
<dbReference type="EnsemblBacteria" id="CAB15227">
    <property type="protein sequence ID" value="CAB15227"/>
    <property type="gene ID" value="BSU_32370"/>
</dbReference>
<dbReference type="GeneID" id="936666"/>
<dbReference type="KEGG" id="bsu:BSU32370"/>
<dbReference type="PATRIC" id="fig|224308.179.peg.3504"/>
<dbReference type="eggNOG" id="COG0737">
    <property type="taxonomic scope" value="Bacteria"/>
</dbReference>
<dbReference type="InParanoid" id="O32133"/>
<dbReference type="OrthoDB" id="9793179at2"/>
<dbReference type="PhylomeDB" id="O32133"/>
<dbReference type="BioCyc" id="BSUB:BSU32370-MONOMER"/>
<dbReference type="Proteomes" id="UP000001570">
    <property type="component" value="Chromosome"/>
</dbReference>
<dbReference type="GO" id="GO:0030288">
    <property type="term" value="C:outer membrane-bounded periplasmic space"/>
    <property type="evidence" value="ECO:0000318"/>
    <property type="project" value="GO_Central"/>
</dbReference>
<dbReference type="GO" id="GO:0008253">
    <property type="term" value="F:5'-nucleotidase activity"/>
    <property type="evidence" value="ECO:0000318"/>
    <property type="project" value="GO_Central"/>
</dbReference>
<dbReference type="GO" id="GO:0046872">
    <property type="term" value="F:metal ion binding"/>
    <property type="evidence" value="ECO:0007669"/>
    <property type="project" value="UniProtKB-KW"/>
</dbReference>
<dbReference type="GO" id="GO:0008768">
    <property type="term" value="F:UDP-sugar diphosphatase activity"/>
    <property type="evidence" value="ECO:0000318"/>
    <property type="project" value="GO_Central"/>
</dbReference>
<dbReference type="GO" id="GO:0009166">
    <property type="term" value="P:nucleotide catabolic process"/>
    <property type="evidence" value="ECO:0007669"/>
    <property type="project" value="InterPro"/>
</dbReference>
<dbReference type="CDD" id="cd00845">
    <property type="entry name" value="MPP_UshA_N_like"/>
    <property type="match status" value="1"/>
</dbReference>
<dbReference type="Gene3D" id="3.60.21.10">
    <property type="match status" value="1"/>
</dbReference>
<dbReference type="Gene3D" id="3.90.780.10">
    <property type="entry name" value="5'-Nucleotidase, C-terminal domain"/>
    <property type="match status" value="1"/>
</dbReference>
<dbReference type="InterPro" id="IPR008334">
    <property type="entry name" value="5'-Nucleotdase_C"/>
</dbReference>
<dbReference type="InterPro" id="IPR036907">
    <property type="entry name" value="5'-Nucleotdase_C_sf"/>
</dbReference>
<dbReference type="InterPro" id="IPR006179">
    <property type="entry name" value="5_nucleotidase/apyrase"/>
</dbReference>
<dbReference type="InterPro" id="IPR029052">
    <property type="entry name" value="Metallo-depent_PP-like"/>
</dbReference>
<dbReference type="InterPro" id="IPR011240">
    <property type="entry name" value="Pesterase_YunD"/>
</dbReference>
<dbReference type="PANTHER" id="PTHR11575">
    <property type="entry name" value="5'-NUCLEOTIDASE-RELATED"/>
    <property type="match status" value="1"/>
</dbReference>
<dbReference type="PANTHER" id="PTHR11575:SF23">
    <property type="entry name" value="5-NUCLEOTIDASE FAMILY PROTEIN"/>
    <property type="match status" value="1"/>
</dbReference>
<dbReference type="Pfam" id="PF02872">
    <property type="entry name" value="5_nucleotid_C"/>
    <property type="match status" value="1"/>
</dbReference>
<dbReference type="PIRSF" id="PIRSF036361">
    <property type="entry name" value="YunD"/>
    <property type="match status" value="1"/>
</dbReference>
<dbReference type="PRINTS" id="PR01607">
    <property type="entry name" value="APYRASEFAMLY"/>
</dbReference>
<dbReference type="SUPFAM" id="SSF55816">
    <property type="entry name" value="5'-nucleotidase (syn. UDP-sugar hydrolase), C-terminal domain"/>
    <property type="match status" value="1"/>
</dbReference>
<dbReference type="SUPFAM" id="SSF56300">
    <property type="entry name" value="Metallo-dependent phosphatases"/>
    <property type="match status" value="1"/>
</dbReference>
<name>YUND_BACSU</name>
<proteinExistence type="inferred from homology"/>
<reference key="1">
    <citation type="journal article" date="1997" name="Nature">
        <title>The complete genome sequence of the Gram-positive bacterium Bacillus subtilis.</title>
        <authorList>
            <person name="Kunst F."/>
            <person name="Ogasawara N."/>
            <person name="Moszer I."/>
            <person name="Albertini A.M."/>
            <person name="Alloni G."/>
            <person name="Azevedo V."/>
            <person name="Bertero M.G."/>
            <person name="Bessieres P."/>
            <person name="Bolotin A."/>
            <person name="Borchert S."/>
            <person name="Borriss R."/>
            <person name="Boursier L."/>
            <person name="Brans A."/>
            <person name="Braun M."/>
            <person name="Brignell S.C."/>
            <person name="Bron S."/>
            <person name="Brouillet S."/>
            <person name="Bruschi C.V."/>
            <person name="Caldwell B."/>
            <person name="Capuano V."/>
            <person name="Carter N.M."/>
            <person name="Choi S.-K."/>
            <person name="Codani J.-J."/>
            <person name="Connerton I.F."/>
            <person name="Cummings N.J."/>
            <person name="Daniel R.A."/>
            <person name="Denizot F."/>
            <person name="Devine K.M."/>
            <person name="Duesterhoeft A."/>
            <person name="Ehrlich S.D."/>
            <person name="Emmerson P.T."/>
            <person name="Entian K.-D."/>
            <person name="Errington J."/>
            <person name="Fabret C."/>
            <person name="Ferrari E."/>
            <person name="Foulger D."/>
            <person name="Fritz C."/>
            <person name="Fujita M."/>
            <person name="Fujita Y."/>
            <person name="Fuma S."/>
            <person name="Galizzi A."/>
            <person name="Galleron N."/>
            <person name="Ghim S.-Y."/>
            <person name="Glaser P."/>
            <person name="Goffeau A."/>
            <person name="Golightly E.J."/>
            <person name="Grandi G."/>
            <person name="Guiseppi G."/>
            <person name="Guy B.J."/>
            <person name="Haga K."/>
            <person name="Haiech J."/>
            <person name="Harwood C.R."/>
            <person name="Henaut A."/>
            <person name="Hilbert H."/>
            <person name="Holsappel S."/>
            <person name="Hosono S."/>
            <person name="Hullo M.-F."/>
            <person name="Itaya M."/>
            <person name="Jones L.-M."/>
            <person name="Joris B."/>
            <person name="Karamata D."/>
            <person name="Kasahara Y."/>
            <person name="Klaerr-Blanchard M."/>
            <person name="Klein C."/>
            <person name="Kobayashi Y."/>
            <person name="Koetter P."/>
            <person name="Koningstein G."/>
            <person name="Krogh S."/>
            <person name="Kumano M."/>
            <person name="Kurita K."/>
            <person name="Lapidus A."/>
            <person name="Lardinois S."/>
            <person name="Lauber J."/>
            <person name="Lazarevic V."/>
            <person name="Lee S.-M."/>
            <person name="Levine A."/>
            <person name="Liu H."/>
            <person name="Masuda S."/>
            <person name="Mauel C."/>
            <person name="Medigue C."/>
            <person name="Medina N."/>
            <person name="Mellado R.P."/>
            <person name="Mizuno M."/>
            <person name="Moestl D."/>
            <person name="Nakai S."/>
            <person name="Noback M."/>
            <person name="Noone D."/>
            <person name="O'Reilly M."/>
            <person name="Ogawa K."/>
            <person name="Ogiwara A."/>
            <person name="Oudega B."/>
            <person name="Park S.-H."/>
            <person name="Parro V."/>
            <person name="Pohl T.M."/>
            <person name="Portetelle D."/>
            <person name="Porwollik S."/>
            <person name="Prescott A.M."/>
            <person name="Presecan E."/>
            <person name="Pujic P."/>
            <person name="Purnelle B."/>
            <person name="Rapoport G."/>
            <person name="Rey M."/>
            <person name="Reynolds S."/>
            <person name="Rieger M."/>
            <person name="Rivolta C."/>
            <person name="Rocha E."/>
            <person name="Roche B."/>
            <person name="Rose M."/>
            <person name="Sadaie Y."/>
            <person name="Sato T."/>
            <person name="Scanlan E."/>
            <person name="Schleich S."/>
            <person name="Schroeter R."/>
            <person name="Scoffone F."/>
            <person name="Sekiguchi J."/>
            <person name="Sekowska A."/>
            <person name="Seror S.J."/>
            <person name="Serror P."/>
            <person name="Shin B.-S."/>
            <person name="Soldo B."/>
            <person name="Sorokin A."/>
            <person name="Tacconi E."/>
            <person name="Takagi T."/>
            <person name="Takahashi H."/>
            <person name="Takemaru K."/>
            <person name="Takeuchi M."/>
            <person name="Tamakoshi A."/>
            <person name="Tanaka T."/>
            <person name="Terpstra P."/>
            <person name="Tognoni A."/>
            <person name="Tosato V."/>
            <person name="Uchiyama S."/>
            <person name="Vandenbol M."/>
            <person name="Vannier F."/>
            <person name="Vassarotti A."/>
            <person name="Viari A."/>
            <person name="Wambutt R."/>
            <person name="Wedler E."/>
            <person name="Wedler H."/>
            <person name="Weitzenegger T."/>
            <person name="Winters P."/>
            <person name="Wipat A."/>
            <person name="Yamamoto H."/>
            <person name="Yamane K."/>
            <person name="Yasumoto K."/>
            <person name="Yata K."/>
            <person name="Yoshida K."/>
            <person name="Yoshikawa H.-F."/>
            <person name="Zumstein E."/>
            <person name="Yoshikawa H."/>
            <person name="Danchin A."/>
        </authorList>
    </citation>
    <scope>NUCLEOTIDE SEQUENCE [LARGE SCALE GENOMIC DNA]</scope>
    <source>
        <strain>168</strain>
    </source>
</reference>
<feature type="chain" id="PRO_0000388338" description="Uncharacterized metallophosphoesterase YunD">
    <location>
        <begin position="1"/>
        <end position="462"/>
    </location>
</feature>
<feature type="coiled-coil region" evidence="2">
    <location>
        <begin position="258"/>
        <end position="291"/>
    </location>
</feature>
<feature type="binding site" evidence="1">
    <location>
        <position position="12"/>
    </location>
    <ligand>
        <name>a divalent metal cation</name>
        <dbReference type="ChEBI" id="CHEBI:60240"/>
        <label>1</label>
    </ligand>
</feature>
<feature type="binding site" evidence="1">
    <location>
        <position position="14"/>
    </location>
    <ligand>
        <name>a divalent metal cation</name>
        <dbReference type="ChEBI" id="CHEBI:60240"/>
        <label>1</label>
    </ligand>
</feature>
<feature type="binding site" evidence="1">
    <location>
        <position position="48"/>
    </location>
    <ligand>
        <name>a divalent metal cation</name>
        <dbReference type="ChEBI" id="CHEBI:60240"/>
        <label>1</label>
    </ligand>
</feature>
<feature type="binding site" evidence="1">
    <location>
        <position position="48"/>
    </location>
    <ligand>
        <name>a divalent metal cation</name>
        <dbReference type="ChEBI" id="CHEBI:60240"/>
        <label>2</label>
    </ligand>
</feature>
<feature type="binding site" evidence="1">
    <location>
        <position position="81"/>
    </location>
    <ligand>
        <name>a divalent metal cation</name>
        <dbReference type="ChEBI" id="CHEBI:60240"/>
        <label>2</label>
    </ligand>
</feature>
<feature type="binding site" evidence="1">
    <location>
        <position position="179"/>
    </location>
    <ligand>
        <name>a divalent metal cation</name>
        <dbReference type="ChEBI" id="CHEBI:60240"/>
        <label>2</label>
    </ligand>
</feature>
<feature type="binding site" evidence="1">
    <location>
        <position position="202"/>
    </location>
    <ligand>
        <name>a divalent metal cation</name>
        <dbReference type="ChEBI" id="CHEBI:60240"/>
        <label>2</label>
    </ligand>
</feature>
<keyword id="KW-0175">Coiled coil</keyword>
<keyword id="KW-0378">Hydrolase</keyword>
<keyword id="KW-0479">Metal-binding</keyword>
<keyword id="KW-1185">Reference proteome</keyword>
<gene>
    <name type="primary">yunD</name>
    <name type="ordered locus">BSU32370</name>
</gene>
<accession>O32133</accession>